<feature type="chain" id="PRO_1000017479" description="Large ribosomal subunit protein bL27">
    <location>
        <begin position="1"/>
        <end position="89"/>
    </location>
</feature>
<feature type="region of interest" description="Disordered" evidence="2">
    <location>
        <begin position="1"/>
        <end position="21"/>
    </location>
</feature>
<feature type="compositionally biased region" description="Polar residues" evidence="2">
    <location>
        <begin position="7"/>
        <end position="19"/>
    </location>
</feature>
<reference key="1">
    <citation type="journal article" date="2007" name="Genome Res.">
        <title>Genome characteristics of facultatively symbiotic Frankia sp. strains reflect host range and host plant biogeography.</title>
        <authorList>
            <person name="Normand P."/>
            <person name="Lapierre P."/>
            <person name="Tisa L.S."/>
            <person name="Gogarten J.P."/>
            <person name="Alloisio N."/>
            <person name="Bagnarol E."/>
            <person name="Bassi C.A."/>
            <person name="Berry A.M."/>
            <person name="Bickhart D.M."/>
            <person name="Choisne N."/>
            <person name="Couloux A."/>
            <person name="Cournoyer B."/>
            <person name="Cruveiller S."/>
            <person name="Daubin V."/>
            <person name="Demange N."/>
            <person name="Francino M.P."/>
            <person name="Goltsman E."/>
            <person name="Huang Y."/>
            <person name="Kopp O.R."/>
            <person name="Labarre L."/>
            <person name="Lapidus A."/>
            <person name="Lavire C."/>
            <person name="Marechal J."/>
            <person name="Martinez M."/>
            <person name="Mastronunzio J.E."/>
            <person name="Mullin B.C."/>
            <person name="Niemann J."/>
            <person name="Pujic P."/>
            <person name="Rawnsley T."/>
            <person name="Rouy Z."/>
            <person name="Schenowitz C."/>
            <person name="Sellstedt A."/>
            <person name="Tavares F."/>
            <person name="Tomkins J.P."/>
            <person name="Vallenet D."/>
            <person name="Valverde C."/>
            <person name="Wall L.G."/>
            <person name="Wang Y."/>
            <person name="Medigue C."/>
            <person name="Benson D.R."/>
        </authorList>
    </citation>
    <scope>NUCLEOTIDE SEQUENCE [LARGE SCALE GENOMIC DNA]</scope>
    <source>
        <strain>DSM 45986 / CECT 9034 / ACN14a</strain>
    </source>
</reference>
<accession>Q0RPF7</accession>
<protein>
    <recommendedName>
        <fullName evidence="1">Large ribosomal subunit protein bL27</fullName>
    </recommendedName>
    <alternativeName>
        <fullName evidence="3">50S ribosomal protein L27</fullName>
    </alternativeName>
</protein>
<name>RL27_FRAAA</name>
<gene>
    <name evidence="1" type="primary">rpmA</name>
    <name type="ordered locus">FRAAL1926</name>
</gene>
<keyword id="KW-1185">Reference proteome</keyword>
<keyword id="KW-0687">Ribonucleoprotein</keyword>
<keyword id="KW-0689">Ribosomal protein</keyword>
<evidence type="ECO:0000255" key="1">
    <source>
        <dbReference type="HAMAP-Rule" id="MF_00539"/>
    </source>
</evidence>
<evidence type="ECO:0000256" key="2">
    <source>
        <dbReference type="SAM" id="MobiDB-lite"/>
    </source>
</evidence>
<evidence type="ECO:0000305" key="3"/>
<comment type="similarity">
    <text evidence="1">Belongs to the bacterial ribosomal protein bL27 family.</text>
</comment>
<organism>
    <name type="scientific">Frankia alni (strain DSM 45986 / CECT 9034 / ACN14a)</name>
    <dbReference type="NCBI Taxonomy" id="326424"/>
    <lineage>
        <taxon>Bacteria</taxon>
        <taxon>Bacillati</taxon>
        <taxon>Actinomycetota</taxon>
        <taxon>Actinomycetes</taxon>
        <taxon>Frankiales</taxon>
        <taxon>Frankiaceae</taxon>
        <taxon>Frankia</taxon>
    </lineage>
</organism>
<proteinExistence type="inferred from homology"/>
<dbReference type="EMBL" id="CT573213">
    <property type="protein sequence ID" value="CAJ60575.1"/>
    <property type="molecule type" value="Genomic_DNA"/>
</dbReference>
<dbReference type="RefSeq" id="WP_009739808.1">
    <property type="nucleotide sequence ID" value="NC_008278.1"/>
</dbReference>
<dbReference type="SMR" id="Q0RPF7"/>
<dbReference type="STRING" id="326424.FRAAL1926"/>
<dbReference type="KEGG" id="fal:FRAAL1926"/>
<dbReference type="eggNOG" id="COG0211">
    <property type="taxonomic scope" value="Bacteria"/>
</dbReference>
<dbReference type="HOGENOM" id="CLU_095424_4_0_11"/>
<dbReference type="OrthoDB" id="9803474at2"/>
<dbReference type="Proteomes" id="UP000000657">
    <property type="component" value="Chromosome"/>
</dbReference>
<dbReference type="GO" id="GO:0022625">
    <property type="term" value="C:cytosolic large ribosomal subunit"/>
    <property type="evidence" value="ECO:0007669"/>
    <property type="project" value="TreeGrafter"/>
</dbReference>
<dbReference type="GO" id="GO:0003735">
    <property type="term" value="F:structural constituent of ribosome"/>
    <property type="evidence" value="ECO:0007669"/>
    <property type="project" value="InterPro"/>
</dbReference>
<dbReference type="GO" id="GO:0006412">
    <property type="term" value="P:translation"/>
    <property type="evidence" value="ECO:0007669"/>
    <property type="project" value="UniProtKB-UniRule"/>
</dbReference>
<dbReference type="FunFam" id="2.40.50.100:FF:000020">
    <property type="entry name" value="50S ribosomal protein L27"/>
    <property type="match status" value="1"/>
</dbReference>
<dbReference type="Gene3D" id="2.40.50.100">
    <property type="match status" value="1"/>
</dbReference>
<dbReference type="HAMAP" id="MF_00539">
    <property type="entry name" value="Ribosomal_bL27"/>
    <property type="match status" value="1"/>
</dbReference>
<dbReference type="InterPro" id="IPR001684">
    <property type="entry name" value="Ribosomal_bL27"/>
</dbReference>
<dbReference type="InterPro" id="IPR018261">
    <property type="entry name" value="Ribosomal_bL27_CS"/>
</dbReference>
<dbReference type="NCBIfam" id="TIGR00062">
    <property type="entry name" value="L27"/>
    <property type="match status" value="1"/>
</dbReference>
<dbReference type="PANTHER" id="PTHR15893:SF0">
    <property type="entry name" value="LARGE RIBOSOMAL SUBUNIT PROTEIN BL27M"/>
    <property type="match status" value="1"/>
</dbReference>
<dbReference type="PANTHER" id="PTHR15893">
    <property type="entry name" value="RIBOSOMAL PROTEIN L27"/>
    <property type="match status" value="1"/>
</dbReference>
<dbReference type="Pfam" id="PF01016">
    <property type="entry name" value="Ribosomal_L27"/>
    <property type="match status" value="1"/>
</dbReference>
<dbReference type="PRINTS" id="PR00063">
    <property type="entry name" value="RIBOSOMALL27"/>
</dbReference>
<dbReference type="SUPFAM" id="SSF110324">
    <property type="entry name" value="Ribosomal L27 protein-like"/>
    <property type="match status" value="1"/>
</dbReference>
<dbReference type="PROSITE" id="PS00831">
    <property type="entry name" value="RIBOSOMAL_L27"/>
    <property type="match status" value="1"/>
</dbReference>
<sequence>MAHKKGASSSRNGRDSNAQRLGVKRFGGQFVKAGEIIVRQRGTHFHPGELVGRGKDDTLFALSAGHVQFGHRRGRRVVNVVEQVAAPAA</sequence>